<feature type="chain" id="PRO_0000215540" description="UPF0253 protein YaeP">
    <location>
        <begin position="1"/>
        <end position="66"/>
    </location>
</feature>
<keyword id="KW-1185">Reference proteome</keyword>
<organism>
    <name type="scientific">Escherichia coli O157:H7</name>
    <dbReference type="NCBI Taxonomy" id="83334"/>
    <lineage>
        <taxon>Bacteria</taxon>
        <taxon>Pseudomonadati</taxon>
        <taxon>Pseudomonadota</taxon>
        <taxon>Gammaproteobacteria</taxon>
        <taxon>Enterobacterales</taxon>
        <taxon>Enterobacteriaceae</taxon>
        <taxon>Escherichia</taxon>
    </lineage>
</organism>
<accession>P0A8K6</accession>
<accession>P52099</accession>
<sequence length="66" mass="7214">MEKYCELIRKRYAEIASGDLGYVPDALGCVLKVLNEMAADDALSEAVREKAAYAAANLLVSDYVNE</sequence>
<gene>
    <name type="primary">yaeP</name>
    <name type="ordered locus">Z0200.1</name>
    <name type="ordered locus">ECs0191.1</name>
</gene>
<protein>
    <recommendedName>
        <fullName>UPF0253 protein YaeP</fullName>
    </recommendedName>
</protein>
<evidence type="ECO:0000305" key="1"/>
<name>YAEP_ECO57</name>
<comment type="similarity">
    <text evidence="1">Belongs to the UPF0253 family.</text>
</comment>
<reference key="1">
    <citation type="journal article" date="2001" name="Nature">
        <title>Genome sequence of enterohaemorrhagic Escherichia coli O157:H7.</title>
        <authorList>
            <person name="Perna N.T."/>
            <person name="Plunkett G. III"/>
            <person name="Burland V."/>
            <person name="Mau B."/>
            <person name="Glasner J.D."/>
            <person name="Rose D.J."/>
            <person name="Mayhew G.F."/>
            <person name="Evans P.S."/>
            <person name="Gregor J."/>
            <person name="Kirkpatrick H.A."/>
            <person name="Posfai G."/>
            <person name="Hackett J."/>
            <person name="Klink S."/>
            <person name="Boutin A."/>
            <person name="Shao Y."/>
            <person name="Miller L."/>
            <person name="Grotbeck E.J."/>
            <person name="Davis N.W."/>
            <person name="Lim A."/>
            <person name="Dimalanta E.T."/>
            <person name="Potamousis K."/>
            <person name="Apodaca J."/>
            <person name="Anantharaman T.S."/>
            <person name="Lin J."/>
            <person name="Yen G."/>
            <person name="Schwartz D.C."/>
            <person name="Welch R.A."/>
            <person name="Blattner F.R."/>
        </authorList>
    </citation>
    <scope>NUCLEOTIDE SEQUENCE [LARGE SCALE GENOMIC DNA]</scope>
    <source>
        <strain>O157:H7 / EDL933 / ATCC 700927 / EHEC</strain>
    </source>
</reference>
<reference key="2">
    <citation type="journal article" date="2001" name="DNA Res.">
        <title>Complete genome sequence of enterohemorrhagic Escherichia coli O157:H7 and genomic comparison with a laboratory strain K-12.</title>
        <authorList>
            <person name="Hayashi T."/>
            <person name="Makino K."/>
            <person name="Ohnishi M."/>
            <person name="Kurokawa K."/>
            <person name="Ishii K."/>
            <person name="Yokoyama K."/>
            <person name="Han C.-G."/>
            <person name="Ohtsubo E."/>
            <person name="Nakayama K."/>
            <person name="Murata T."/>
            <person name="Tanaka M."/>
            <person name="Tobe T."/>
            <person name="Iida T."/>
            <person name="Takami H."/>
            <person name="Honda T."/>
            <person name="Sasakawa C."/>
            <person name="Ogasawara N."/>
            <person name="Yasunaga T."/>
            <person name="Kuhara S."/>
            <person name="Shiba T."/>
            <person name="Hattori M."/>
            <person name="Shinagawa H."/>
        </authorList>
    </citation>
    <scope>NUCLEOTIDE SEQUENCE [LARGE SCALE GENOMIC DNA]</scope>
    <source>
        <strain>O157:H7 / Sakai / RIMD 0509952 / EHEC</strain>
    </source>
</reference>
<dbReference type="EMBL" id="AE005174">
    <property type="status" value="NOT_ANNOTATED_CDS"/>
    <property type="molecule type" value="Genomic_DNA"/>
</dbReference>
<dbReference type="EMBL" id="BA000007">
    <property type="status" value="NOT_ANNOTATED_CDS"/>
    <property type="molecule type" value="Genomic_DNA"/>
</dbReference>
<dbReference type="RefSeq" id="WP_000417058.1">
    <property type="nucleotide sequence ID" value="NZ_VOAI01000002.1"/>
</dbReference>
<dbReference type="SMR" id="P0A8K6"/>
<dbReference type="PATRIC" id="fig|83334.175.peg.339"/>
<dbReference type="eggNOG" id="ENOG5032Z3X">
    <property type="taxonomic scope" value="Bacteria"/>
</dbReference>
<dbReference type="OMA" id="CVLKTLD"/>
<dbReference type="Proteomes" id="UP000000558">
    <property type="component" value="Chromosome"/>
</dbReference>
<dbReference type="Proteomes" id="UP000002519">
    <property type="component" value="Chromosome"/>
</dbReference>
<dbReference type="HAMAP" id="MF_01064">
    <property type="entry name" value="UPF0253"/>
    <property type="match status" value="1"/>
</dbReference>
<dbReference type="InterPro" id="IPR009624">
    <property type="entry name" value="UPF0253"/>
</dbReference>
<dbReference type="NCBIfam" id="NF003436">
    <property type="entry name" value="PRK04964.1"/>
    <property type="match status" value="1"/>
</dbReference>
<dbReference type="Pfam" id="PF06786">
    <property type="entry name" value="UPF0253"/>
    <property type="match status" value="1"/>
</dbReference>
<proteinExistence type="inferred from homology"/>